<feature type="chain" id="PRO_0000098680" description="5-methyltetrahydropteroyltriglutamate--homocysteine methyltransferase">
    <location>
        <begin position="1"/>
        <end position="758"/>
    </location>
</feature>
<feature type="active site" description="Proton donor" evidence="1">
    <location>
        <position position="699"/>
    </location>
</feature>
<feature type="binding site" evidence="1">
    <location>
        <begin position="16"/>
        <end position="19"/>
    </location>
    <ligand>
        <name>5-methyltetrahydropteroyltri-L-glutamate</name>
        <dbReference type="ChEBI" id="CHEBI:58207"/>
    </ligand>
</feature>
<feature type="binding site" evidence="1">
    <location>
        <position position="116"/>
    </location>
    <ligand>
        <name>5-methyltetrahydropteroyltri-L-glutamate</name>
        <dbReference type="ChEBI" id="CHEBI:58207"/>
    </ligand>
</feature>
<feature type="binding site" evidence="1">
    <location>
        <begin position="436"/>
        <end position="438"/>
    </location>
    <ligand>
        <name>L-homocysteine</name>
        <dbReference type="ChEBI" id="CHEBI:58199"/>
    </ligand>
</feature>
<feature type="binding site" evidence="1">
    <location>
        <begin position="436"/>
        <end position="438"/>
    </location>
    <ligand>
        <name>L-methionine</name>
        <dbReference type="ChEBI" id="CHEBI:57844"/>
    </ligand>
</feature>
<feature type="binding site" evidence="1">
    <location>
        <position position="489"/>
    </location>
    <ligand>
        <name>L-homocysteine</name>
        <dbReference type="ChEBI" id="CHEBI:58199"/>
    </ligand>
</feature>
<feature type="binding site" evidence="1">
    <location>
        <position position="489"/>
    </location>
    <ligand>
        <name>L-methionine</name>
        <dbReference type="ChEBI" id="CHEBI:57844"/>
    </ligand>
</feature>
<feature type="binding site" evidence="1">
    <location>
        <begin position="520"/>
        <end position="521"/>
    </location>
    <ligand>
        <name>5-methyltetrahydropteroyltri-L-glutamate</name>
        <dbReference type="ChEBI" id="CHEBI:58207"/>
    </ligand>
</feature>
<feature type="binding site" evidence="1">
    <location>
        <position position="566"/>
    </location>
    <ligand>
        <name>5-methyltetrahydropteroyltri-L-glutamate</name>
        <dbReference type="ChEBI" id="CHEBI:58207"/>
    </ligand>
</feature>
<feature type="binding site" evidence="1">
    <location>
        <position position="604"/>
    </location>
    <ligand>
        <name>L-homocysteine</name>
        <dbReference type="ChEBI" id="CHEBI:58199"/>
    </ligand>
</feature>
<feature type="binding site" evidence="1">
    <location>
        <position position="604"/>
    </location>
    <ligand>
        <name>L-methionine</name>
        <dbReference type="ChEBI" id="CHEBI:57844"/>
    </ligand>
</feature>
<feature type="binding site" evidence="1">
    <location>
        <position position="610"/>
    </location>
    <ligand>
        <name>5-methyltetrahydropteroyltri-L-glutamate</name>
        <dbReference type="ChEBI" id="CHEBI:58207"/>
    </ligand>
</feature>
<feature type="binding site" evidence="1">
    <location>
        <position position="646"/>
    </location>
    <ligand>
        <name>Zn(2+)</name>
        <dbReference type="ChEBI" id="CHEBI:29105"/>
        <note>catalytic</note>
    </ligand>
</feature>
<feature type="binding site" evidence="1">
    <location>
        <position position="648"/>
    </location>
    <ligand>
        <name>Zn(2+)</name>
        <dbReference type="ChEBI" id="CHEBI:29105"/>
        <note>catalytic</note>
    </ligand>
</feature>
<feature type="binding site" evidence="1">
    <location>
        <position position="670"/>
    </location>
    <ligand>
        <name>Zn(2+)</name>
        <dbReference type="ChEBI" id="CHEBI:29105"/>
        <note>catalytic</note>
    </ligand>
</feature>
<feature type="binding site" evidence="1">
    <location>
        <position position="731"/>
    </location>
    <ligand>
        <name>Zn(2+)</name>
        <dbReference type="ChEBI" id="CHEBI:29105"/>
        <note>catalytic</note>
    </ligand>
</feature>
<sequence length="758" mass="85643">MTIVTNLSFPRIGARRELKRALESHWRGETDATQLQHTARELRARHWQLQRDTGVDLPPSNDFSLYDHVLDTAFLFDAIPQRYRALADADPLAGYFAMARGRQADGIDLHALEMTKWFDTNYHYLVPELHRDQHFALRGNKPIAEFEEALALGITTRPVLLGPVSFLLLSKTVDGSNRLDLLERLLPVYTQLLRQLQASGAEWVQIDEPTLVLDLDAQTQQAFRKAYAALNQGPRPKLLLTSYFGPLGDNLELALQLPADGLHIDLVRGTEQLDAVLNTLPAGRVLSAGLVNGRNIWRTALDNALTLARYAQGRIGKDHVWLAPSCSLLHVPVDLEQEKNLDADVRNWLAFAKQKLSELRVLADALDNKPEAETALTQTRQALEARRQSPKVHRPEVAQRLAALTPDTTQRNTAYPQRSQAQQQTLNLPAYPTTTIGSFPQTLEVREARAQFKSGKLSESDYETFLKAETERCIRTQEEIGLDVLVHGEFERNDMVEYFGEQLDGFIFTKLGWVQSYGSRCVKPPIIYGDVVRPAPMTVTWSAYAQSLTDKPMKGMLTGPVTMLQWSFVRDDQERAQTCRQIALALRDEVQDLEKAGIKVIQIDEPAIREGLPLRRGEWADYLNWAVESFRIASSNVRDTTQIHTHMCYSEFNDIIEAVAALDADVISIETSRSRMELLDAFVKFRYPNAIGPGVYDIHSPRVPQEEEMVLLLKKARAVLPPEQLWVNPDCGLKTRGWKETRAALQTMVHAAQRLRAE</sequence>
<dbReference type="EC" id="2.1.1.14" evidence="1"/>
<dbReference type="EMBL" id="AE003849">
    <property type="protein sequence ID" value="AAF85071.1"/>
    <property type="molecule type" value="Genomic_DNA"/>
</dbReference>
<dbReference type="PIR" id="F82578">
    <property type="entry name" value="F82578"/>
</dbReference>
<dbReference type="RefSeq" id="WP_010894720.1">
    <property type="nucleotide sequence ID" value="NC_002488.3"/>
</dbReference>
<dbReference type="SMR" id="Q9PB72"/>
<dbReference type="STRING" id="160492.XF_2272"/>
<dbReference type="KEGG" id="xfa:XF_2272"/>
<dbReference type="PATRIC" id="fig|160492.11.peg.2420"/>
<dbReference type="eggNOG" id="COG0620">
    <property type="taxonomic scope" value="Bacteria"/>
</dbReference>
<dbReference type="HOGENOM" id="CLU_013175_0_0_6"/>
<dbReference type="UniPathway" id="UPA00051">
    <property type="reaction ID" value="UER00082"/>
</dbReference>
<dbReference type="Proteomes" id="UP000000812">
    <property type="component" value="Chromosome"/>
</dbReference>
<dbReference type="GO" id="GO:0003871">
    <property type="term" value="F:5-methyltetrahydropteroyltriglutamate-homocysteine S-methyltransferase activity"/>
    <property type="evidence" value="ECO:0007669"/>
    <property type="project" value="UniProtKB-UniRule"/>
</dbReference>
<dbReference type="GO" id="GO:0008270">
    <property type="term" value="F:zinc ion binding"/>
    <property type="evidence" value="ECO:0007669"/>
    <property type="project" value="InterPro"/>
</dbReference>
<dbReference type="GO" id="GO:0009086">
    <property type="term" value="P:methionine biosynthetic process"/>
    <property type="evidence" value="ECO:0007669"/>
    <property type="project" value="UniProtKB-UniRule"/>
</dbReference>
<dbReference type="GO" id="GO:0032259">
    <property type="term" value="P:methylation"/>
    <property type="evidence" value="ECO:0007669"/>
    <property type="project" value="UniProtKB-KW"/>
</dbReference>
<dbReference type="CDD" id="cd03311">
    <property type="entry name" value="CIMS_C_terminal_like"/>
    <property type="match status" value="1"/>
</dbReference>
<dbReference type="CDD" id="cd03312">
    <property type="entry name" value="CIMS_N_terminal_like"/>
    <property type="match status" value="1"/>
</dbReference>
<dbReference type="FunFam" id="3.20.20.210:FF:000002">
    <property type="entry name" value="5-methyltetrahydropteroyltriglutamate--homocysteine methyltransferase"/>
    <property type="match status" value="1"/>
</dbReference>
<dbReference type="FunFam" id="3.20.20.210:FF:000003">
    <property type="entry name" value="5-methyltetrahydropteroyltriglutamate--homocysteine methyltransferase"/>
    <property type="match status" value="1"/>
</dbReference>
<dbReference type="Gene3D" id="3.20.20.210">
    <property type="match status" value="2"/>
</dbReference>
<dbReference type="HAMAP" id="MF_00172">
    <property type="entry name" value="Meth_synth"/>
    <property type="match status" value="1"/>
</dbReference>
<dbReference type="InterPro" id="IPR013215">
    <property type="entry name" value="Cbl-indep_Met_Synth_N"/>
</dbReference>
<dbReference type="InterPro" id="IPR006276">
    <property type="entry name" value="Cobalamin-indep_Met_synthase"/>
</dbReference>
<dbReference type="InterPro" id="IPR002629">
    <property type="entry name" value="Met_Synth_C/arc"/>
</dbReference>
<dbReference type="InterPro" id="IPR038071">
    <property type="entry name" value="UROD/MetE-like_sf"/>
</dbReference>
<dbReference type="NCBIfam" id="TIGR01371">
    <property type="entry name" value="met_syn_B12ind"/>
    <property type="match status" value="1"/>
</dbReference>
<dbReference type="NCBIfam" id="NF003556">
    <property type="entry name" value="PRK05222.1"/>
    <property type="match status" value="1"/>
</dbReference>
<dbReference type="PANTHER" id="PTHR30519">
    <property type="entry name" value="5-METHYLTETRAHYDROPTEROYLTRIGLUTAMATE--HOMOCYSTEINE METHYLTRANSFERASE"/>
    <property type="match status" value="1"/>
</dbReference>
<dbReference type="Pfam" id="PF08267">
    <property type="entry name" value="Meth_synt_1"/>
    <property type="match status" value="1"/>
</dbReference>
<dbReference type="Pfam" id="PF01717">
    <property type="entry name" value="Meth_synt_2"/>
    <property type="match status" value="1"/>
</dbReference>
<dbReference type="PIRSF" id="PIRSF000382">
    <property type="entry name" value="MeTrfase_B12_ind"/>
    <property type="match status" value="1"/>
</dbReference>
<dbReference type="SUPFAM" id="SSF51726">
    <property type="entry name" value="UROD/MetE-like"/>
    <property type="match status" value="2"/>
</dbReference>
<comment type="function">
    <text evidence="1">Catalyzes the transfer of a methyl group from 5-methyltetrahydrofolate to homocysteine resulting in methionine formation.</text>
</comment>
<comment type="catalytic activity">
    <reaction evidence="1">
        <text>5-methyltetrahydropteroyltri-L-glutamate + L-homocysteine = tetrahydropteroyltri-L-glutamate + L-methionine</text>
        <dbReference type="Rhea" id="RHEA:21196"/>
        <dbReference type="ChEBI" id="CHEBI:57844"/>
        <dbReference type="ChEBI" id="CHEBI:58140"/>
        <dbReference type="ChEBI" id="CHEBI:58199"/>
        <dbReference type="ChEBI" id="CHEBI:58207"/>
        <dbReference type="EC" id="2.1.1.14"/>
    </reaction>
</comment>
<comment type="cofactor">
    <cofactor evidence="1">
        <name>Zn(2+)</name>
        <dbReference type="ChEBI" id="CHEBI:29105"/>
    </cofactor>
    <text evidence="1">Binds 1 zinc ion per subunit.</text>
</comment>
<comment type="pathway">
    <text evidence="1">Amino-acid biosynthesis; L-methionine biosynthesis via de novo pathway; L-methionine from L-homocysteine (MetE route): step 1/1.</text>
</comment>
<comment type="similarity">
    <text evidence="1 2">Belongs to the vitamin-B12 independent methionine synthase family.</text>
</comment>
<protein>
    <recommendedName>
        <fullName evidence="1">5-methyltetrahydropteroyltriglutamate--homocysteine methyltransferase</fullName>
        <ecNumber evidence="1">2.1.1.14</ecNumber>
    </recommendedName>
    <alternativeName>
        <fullName evidence="1">Cobalamin-independent methionine synthase</fullName>
    </alternativeName>
    <alternativeName>
        <fullName evidence="1">Methionine synthase, vitamin-B12 independent isozyme</fullName>
    </alternativeName>
</protein>
<keyword id="KW-0028">Amino-acid biosynthesis</keyword>
<keyword id="KW-0479">Metal-binding</keyword>
<keyword id="KW-0486">Methionine biosynthesis</keyword>
<keyword id="KW-0489">Methyltransferase</keyword>
<keyword id="KW-0677">Repeat</keyword>
<keyword id="KW-0808">Transferase</keyword>
<keyword id="KW-0862">Zinc</keyword>
<evidence type="ECO:0000255" key="1">
    <source>
        <dbReference type="HAMAP-Rule" id="MF_00172"/>
    </source>
</evidence>
<evidence type="ECO:0000305" key="2"/>
<proteinExistence type="inferred from homology"/>
<accession>Q9PB72</accession>
<reference key="1">
    <citation type="journal article" date="2000" name="Nature">
        <title>The genome sequence of the plant pathogen Xylella fastidiosa.</title>
        <authorList>
            <person name="Simpson A.J.G."/>
            <person name="Reinach F.C."/>
            <person name="Arruda P."/>
            <person name="Abreu F.A."/>
            <person name="Acencio M."/>
            <person name="Alvarenga R."/>
            <person name="Alves L.M.C."/>
            <person name="Araya J.E."/>
            <person name="Baia G.S."/>
            <person name="Baptista C.S."/>
            <person name="Barros M.H."/>
            <person name="Bonaccorsi E.D."/>
            <person name="Bordin S."/>
            <person name="Bove J.M."/>
            <person name="Briones M.R.S."/>
            <person name="Bueno M.R.P."/>
            <person name="Camargo A.A."/>
            <person name="Camargo L.E.A."/>
            <person name="Carraro D.M."/>
            <person name="Carrer H."/>
            <person name="Colauto N.B."/>
            <person name="Colombo C."/>
            <person name="Costa F.F."/>
            <person name="Costa M.C.R."/>
            <person name="Costa-Neto C.M."/>
            <person name="Coutinho L.L."/>
            <person name="Cristofani M."/>
            <person name="Dias-Neto E."/>
            <person name="Docena C."/>
            <person name="El-Dorry H."/>
            <person name="Facincani A.P."/>
            <person name="Ferreira A.J.S."/>
            <person name="Ferreira V.C.A."/>
            <person name="Ferro J.A."/>
            <person name="Fraga J.S."/>
            <person name="Franca S.C."/>
            <person name="Franco M.C."/>
            <person name="Frohme M."/>
            <person name="Furlan L.R."/>
            <person name="Garnier M."/>
            <person name="Goldman G.H."/>
            <person name="Goldman M.H.S."/>
            <person name="Gomes S.L."/>
            <person name="Gruber A."/>
            <person name="Ho P.L."/>
            <person name="Hoheisel J.D."/>
            <person name="Junqueira M.L."/>
            <person name="Kemper E.L."/>
            <person name="Kitajima J.P."/>
            <person name="Krieger J.E."/>
            <person name="Kuramae E.E."/>
            <person name="Laigret F."/>
            <person name="Lambais M.R."/>
            <person name="Leite L.C.C."/>
            <person name="Lemos E.G.M."/>
            <person name="Lemos M.V.F."/>
            <person name="Lopes S.A."/>
            <person name="Lopes C.R."/>
            <person name="Machado J.A."/>
            <person name="Machado M.A."/>
            <person name="Madeira A.M.B.N."/>
            <person name="Madeira H.M.F."/>
            <person name="Marino C.L."/>
            <person name="Marques M.V."/>
            <person name="Martins E.A.L."/>
            <person name="Martins E.M.F."/>
            <person name="Matsukuma A.Y."/>
            <person name="Menck C.F.M."/>
            <person name="Miracca E.C."/>
            <person name="Miyaki C.Y."/>
            <person name="Monteiro-Vitorello C.B."/>
            <person name="Moon D.H."/>
            <person name="Nagai M.A."/>
            <person name="Nascimento A.L.T.O."/>
            <person name="Netto L.E.S."/>
            <person name="Nhani A. Jr."/>
            <person name="Nobrega F.G."/>
            <person name="Nunes L.R."/>
            <person name="Oliveira M.A."/>
            <person name="de Oliveira M.C."/>
            <person name="de Oliveira R.C."/>
            <person name="Palmieri D.A."/>
            <person name="Paris A."/>
            <person name="Peixoto B.R."/>
            <person name="Pereira G.A.G."/>
            <person name="Pereira H.A. Jr."/>
            <person name="Pesquero J.B."/>
            <person name="Quaggio R.B."/>
            <person name="Roberto P.G."/>
            <person name="Rodrigues V."/>
            <person name="de Rosa A.J.M."/>
            <person name="de Rosa V.E. Jr."/>
            <person name="de Sa R.G."/>
            <person name="Santelli R.V."/>
            <person name="Sawasaki H.E."/>
            <person name="da Silva A.C.R."/>
            <person name="da Silva A.M."/>
            <person name="da Silva F.R."/>
            <person name="Silva W.A. Jr."/>
            <person name="da Silveira J.F."/>
            <person name="Silvestri M.L.Z."/>
            <person name="Siqueira W.J."/>
            <person name="de Souza A.A."/>
            <person name="de Souza A.P."/>
            <person name="Terenzi M.F."/>
            <person name="Truffi D."/>
            <person name="Tsai S.M."/>
            <person name="Tsuhako M.H."/>
            <person name="Vallada H."/>
            <person name="Van Sluys M.A."/>
            <person name="Verjovski-Almeida S."/>
            <person name="Vettore A.L."/>
            <person name="Zago M.A."/>
            <person name="Zatz M."/>
            <person name="Meidanis J."/>
            <person name="Setubal J.C."/>
        </authorList>
    </citation>
    <scope>NUCLEOTIDE SEQUENCE [LARGE SCALE GENOMIC DNA]</scope>
    <source>
        <strain>9a5c</strain>
    </source>
</reference>
<organism>
    <name type="scientific">Xylella fastidiosa (strain 9a5c)</name>
    <dbReference type="NCBI Taxonomy" id="160492"/>
    <lineage>
        <taxon>Bacteria</taxon>
        <taxon>Pseudomonadati</taxon>
        <taxon>Pseudomonadota</taxon>
        <taxon>Gammaproteobacteria</taxon>
        <taxon>Lysobacterales</taxon>
        <taxon>Lysobacteraceae</taxon>
        <taxon>Xylella</taxon>
    </lineage>
</organism>
<gene>
    <name evidence="1" type="primary">metE</name>
    <name type="ordered locus">XF_2272</name>
</gene>
<name>METE_XYLFA</name>